<name>YOJO_ECOL6</name>
<gene>
    <name type="primary">yojO</name>
    <name type="ordered locus">c2748</name>
</gene>
<protein>
    <recommendedName>
        <fullName>Uncharacterized protein YojO</fullName>
    </recommendedName>
</protein>
<proteinExistence type="inferred from homology"/>
<sequence>MHTPIGVKPVAGSKEWREAWQKRAFAHISNGYKHIYIAINSPEIFLLVCFLIRI</sequence>
<reference key="1">
    <citation type="journal article" date="2002" name="Proc. Natl. Acad. Sci. U.S.A.">
        <title>Extensive mosaic structure revealed by the complete genome sequence of uropathogenic Escherichia coli.</title>
        <authorList>
            <person name="Welch R.A."/>
            <person name="Burland V."/>
            <person name="Plunkett G. III"/>
            <person name="Redford P."/>
            <person name="Roesch P."/>
            <person name="Rasko D."/>
            <person name="Buckles E.L."/>
            <person name="Liou S.-R."/>
            <person name="Boutin A."/>
            <person name="Hackett J."/>
            <person name="Stroud D."/>
            <person name="Mayhew G.F."/>
            <person name="Rose D.J."/>
            <person name="Zhou S."/>
            <person name="Schwartz D.C."/>
            <person name="Perna N.T."/>
            <person name="Mobley H.L.T."/>
            <person name="Donnenberg M.S."/>
            <person name="Blattner F.R."/>
        </authorList>
    </citation>
    <scope>NUCLEOTIDE SEQUENCE [LARGE SCALE GENOMIC DNA]</scope>
    <source>
        <strain>CFT073 / ATCC 700928 / UPEC</strain>
    </source>
</reference>
<dbReference type="EMBL" id="AE014075">
    <property type="protein sequence ID" value="AAN81202.1"/>
    <property type="status" value="ALT_INIT"/>
    <property type="molecule type" value="Genomic_DNA"/>
</dbReference>
<dbReference type="RefSeq" id="WP_001296243.1">
    <property type="nucleotide sequence ID" value="NZ_CP051263.1"/>
</dbReference>
<dbReference type="STRING" id="199310.c2748"/>
<dbReference type="KEGG" id="ecc:c2748"/>
<dbReference type="HOGENOM" id="CLU_211463_0_0_6"/>
<dbReference type="Proteomes" id="UP000001410">
    <property type="component" value="Chromosome"/>
</dbReference>
<accession>Q8FFQ7</accession>
<keyword id="KW-1185">Reference proteome</keyword>
<organism>
    <name type="scientific">Escherichia coli O6:H1 (strain CFT073 / ATCC 700928 / UPEC)</name>
    <dbReference type="NCBI Taxonomy" id="199310"/>
    <lineage>
        <taxon>Bacteria</taxon>
        <taxon>Pseudomonadati</taxon>
        <taxon>Pseudomonadota</taxon>
        <taxon>Gammaproteobacteria</taxon>
        <taxon>Enterobacterales</taxon>
        <taxon>Enterobacteriaceae</taxon>
        <taxon>Escherichia</taxon>
    </lineage>
</organism>
<evidence type="ECO:0000305" key="1"/>
<feature type="chain" id="PRO_0000311792" description="Uncharacterized protein YojO">
    <location>
        <begin position="1"/>
        <end position="54"/>
    </location>
</feature>
<comment type="similarity">
    <text evidence="1">Belongs to the YojO family.</text>
</comment>
<comment type="sequence caution" evidence="1">
    <conflict type="erroneous initiation">
        <sequence resource="EMBL-CDS" id="AAN81202"/>
    </conflict>
</comment>